<feature type="chain" id="PRO_1000047506" description="Glycine--tRNA ligase alpha subunit">
    <location>
        <begin position="1"/>
        <end position="305"/>
    </location>
</feature>
<accession>A4W3J5</accession>
<protein>
    <recommendedName>
        <fullName evidence="1">Glycine--tRNA ligase alpha subunit</fullName>
        <ecNumber evidence="1">6.1.1.14</ecNumber>
    </recommendedName>
    <alternativeName>
        <fullName evidence="1">Glycyl-tRNA synthetase alpha subunit</fullName>
        <shortName evidence="1">GlyRS</shortName>
    </alternativeName>
</protein>
<gene>
    <name evidence="1" type="primary">glyQ</name>
    <name type="ordered locus">SSU98_1776</name>
</gene>
<keyword id="KW-0030">Aminoacyl-tRNA synthetase</keyword>
<keyword id="KW-0067">ATP-binding</keyword>
<keyword id="KW-0963">Cytoplasm</keyword>
<keyword id="KW-0436">Ligase</keyword>
<keyword id="KW-0547">Nucleotide-binding</keyword>
<keyword id="KW-0648">Protein biosynthesis</keyword>
<evidence type="ECO:0000255" key="1">
    <source>
        <dbReference type="HAMAP-Rule" id="MF_00254"/>
    </source>
</evidence>
<name>SYGA_STRS2</name>
<dbReference type="EC" id="6.1.1.14" evidence="1"/>
<dbReference type="EMBL" id="CP000408">
    <property type="protein sequence ID" value="ABP92934.1"/>
    <property type="molecule type" value="Genomic_DNA"/>
</dbReference>
<dbReference type="SMR" id="A4W3J5"/>
<dbReference type="KEGG" id="ssv:SSU98_1776"/>
<dbReference type="HOGENOM" id="CLU_057066_1_0_9"/>
<dbReference type="GO" id="GO:0005829">
    <property type="term" value="C:cytosol"/>
    <property type="evidence" value="ECO:0007669"/>
    <property type="project" value="TreeGrafter"/>
</dbReference>
<dbReference type="GO" id="GO:0005524">
    <property type="term" value="F:ATP binding"/>
    <property type="evidence" value="ECO:0007669"/>
    <property type="project" value="UniProtKB-UniRule"/>
</dbReference>
<dbReference type="GO" id="GO:0140096">
    <property type="term" value="F:catalytic activity, acting on a protein"/>
    <property type="evidence" value="ECO:0007669"/>
    <property type="project" value="UniProtKB-ARBA"/>
</dbReference>
<dbReference type="GO" id="GO:0004820">
    <property type="term" value="F:glycine-tRNA ligase activity"/>
    <property type="evidence" value="ECO:0007669"/>
    <property type="project" value="UniProtKB-UniRule"/>
</dbReference>
<dbReference type="GO" id="GO:0016740">
    <property type="term" value="F:transferase activity"/>
    <property type="evidence" value="ECO:0007669"/>
    <property type="project" value="UniProtKB-ARBA"/>
</dbReference>
<dbReference type="GO" id="GO:0006426">
    <property type="term" value="P:glycyl-tRNA aminoacylation"/>
    <property type="evidence" value="ECO:0007669"/>
    <property type="project" value="UniProtKB-UniRule"/>
</dbReference>
<dbReference type="CDD" id="cd00733">
    <property type="entry name" value="GlyRS_alpha_core"/>
    <property type="match status" value="1"/>
</dbReference>
<dbReference type="FunFam" id="3.30.930.10:FF:000006">
    <property type="entry name" value="Glycine--tRNA ligase alpha subunit"/>
    <property type="match status" value="1"/>
</dbReference>
<dbReference type="Gene3D" id="3.30.930.10">
    <property type="entry name" value="Bira Bifunctional Protein, Domain 2"/>
    <property type="match status" value="1"/>
</dbReference>
<dbReference type="Gene3D" id="1.20.58.180">
    <property type="entry name" value="Class II aaRS and biotin synthetases, domain 2"/>
    <property type="match status" value="1"/>
</dbReference>
<dbReference type="HAMAP" id="MF_00254">
    <property type="entry name" value="Gly_tRNA_synth_alpha"/>
    <property type="match status" value="1"/>
</dbReference>
<dbReference type="InterPro" id="IPR045864">
    <property type="entry name" value="aa-tRNA-synth_II/BPL/LPL"/>
</dbReference>
<dbReference type="InterPro" id="IPR006194">
    <property type="entry name" value="Gly-tRNA-synth_heterodimer"/>
</dbReference>
<dbReference type="InterPro" id="IPR002310">
    <property type="entry name" value="Gly-tRNA_ligase_asu"/>
</dbReference>
<dbReference type="NCBIfam" id="TIGR00388">
    <property type="entry name" value="glyQ"/>
    <property type="match status" value="1"/>
</dbReference>
<dbReference type="NCBIfam" id="NF006827">
    <property type="entry name" value="PRK09348.1"/>
    <property type="match status" value="1"/>
</dbReference>
<dbReference type="PANTHER" id="PTHR30075:SF2">
    <property type="entry name" value="GLYCINE--TRNA LIGASE, CHLOROPLASTIC_MITOCHONDRIAL 2"/>
    <property type="match status" value="1"/>
</dbReference>
<dbReference type="PANTHER" id="PTHR30075">
    <property type="entry name" value="GLYCYL-TRNA SYNTHETASE"/>
    <property type="match status" value="1"/>
</dbReference>
<dbReference type="Pfam" id="PF02091">
    <property type="entry name" value="tRNA-synt_2e"/>
    <property type="match status" value="1"/>
</dbReference>
<dbReference type="PRINTS" id="PR01044">
    <property type="entry name" value="TRNASYNTHGA"/>
</dbReference>
<dbReference type="SUPFAM" id="SSF55681">
    <property type="entry name" value="Class II aaRS and biotin synthetases"/>
    <property type="match status" value="1"/>
</dbReference>
<dbReference type="PROSITE" id="PS50861">
    <property type="entry name" value="AA_TRNA_LIGASE_II_GLYAB"/>
    <property type="match status" value="1"/>
</dbReference>
<sequence>MSKKLTFQEIILTLQQFWNEQGCLLMQAYDTEKGAGTMSPYTFLRAIGPEPWNAAYVEPSRRPADGRYGENPNRLYQHHQFQVVMKPSPSNIQELYLESLERLGINPLEHDIRFVEDNWENPSTGSAGLGWEVWLDGMEITQFTYFQQVGGLATGPVTAEVTYGLERLASYIQEVDSVYDIEWADGVKYGEIFIQPEYEHSKYSFEVSDQDMLLENFTKFEKEAERALEEGLVHPAFDYVLKCSHTFNLLDARGAVSVTERAGYIARIRNLARVVAKTFVAERKKLGFPLLDEATRAELLKEDAE</sequence>
<proteinExistence type="inferred from homology"/>
<organism>
    <name type="scientific">Streptococcus suis (strain 98HAH33)</name>
    <dbReference type="NCBI Taxonomy" id="391296"/>
    <lineage>
        <taxon>Bacteria</taxon>
        <taxon>Bacillati</taxon>
        <taxon>Bacillota</taxon>
        <taxon>Bacilli</taxon>
        <taxon>Lactobacillales</taxon>
        <taxon>Streptococcaceae</taxon>
        <taxon>Streptococcus</taxon>
    </lineage>
</organism>
<comment type="catalytic activity">
    <reaction evidence="1">
        <text>tRNA(Gly) + glycine + ATP = glycyl-tRNA(Gly) + AMP + diphosphate</text>
        <dbReference type="Rhea" id="RHEA:16013"/>
        <dbReference type="Rhea" id="RHEA-COMP:9664"/>
        <dbReference type="Rhea" id="RHEA-COMP:9683"/>
        <dbReference type="ChEBI" id="CHEBI:30616"/>
        <dbReference type="ChEBI" id="CHEBI:33019"/>
        <dbReference type="ChEBI" id="CHEBI:57305"/>
        <dbReference type="ChEBI" id="CHEBI:78442"/>
        <dbReference type="ChEBI" id="CHEBI:78522"/>
        <dbReference type="ChEBI" id="CHEBI:456215"/>
        <dbReference type="EC" id="6.1.1.14"/>
    </reaction>
</comment>
<comment type="subunit">
    <text evidence="1">Tetramer of two alpha and two beta subunits.</text>
</comment>
<comment type="subcellular location">
    <subcellularLocation>
        <location evidence="1">Cytoplasm</location>
    </subcellularLocation>
</comment>
<comment type="similarity">
    <text evidence="1">Belongs to the class-II aminoacyl-tRNA synthetase family.</text>
</comment>
<reference key="1">
    <citation type="journal article" date="2007" name="PLoS ONE">
        <title>A glimpse of streptococcal toxic shock syndrome from comparative genomics of S. suis 2 Chinese isolates.</title>
        <authorList>
            <person name="Chen C."/>
            <person name="Tang J."/>
            <person name="Dong W."/>
            <person name="Wang C."/>
            <person name="Feng Y."/>
            <person name="Wang J."/>
            <person name="Zheng F."/>
            <person name="Pan X."/>
            <person name="Liu D."/>
            <person name="Li M."/>
            <person name="Song Y."/>
            <person name="Zhu X."/>
            <person name="Sun H."/>
            <person name="Feng T."/>
            <person name="Guo Z."/>
            <person name="Ju A."/>
            <person name="Ge J."/>
            <person name="Dong Y."/>
            <person name="Sun W."/>
            <person name="Jiang Y."/>
            <person name="Wang J."/>
            <person name="Yan J."/>
            <person name="Yang H."/>
            <person name="Wang X."/>
            <person name="Gao G.F."/>
            <person name="Yang R."/>
            <person name="Wang J."/>
            <person name="Yu J."/>
        </authorList>
    </citation>
    <scope>NUCLEOTIDE SEQUENCE [LARGE SCALE GENOMIC DNA]</scope>
    <source>
        <strain>98HAH33</strain>
    </source>
</reference>